<accession>Q3MFA7</accession>
<gene>
    <name evidence="1" type="primary">rplF</name>
    <name evidence="1" type="synonym">rpl6</name>
    <name type="ordered locus">Ava_0705</name>
</gene>
<feature type="chain" id="PRO_0000260836" description="Large ribosomal subunit protein uL6">
    <location>
        <begin position="1"/>
        <end position="182"/>
    </location>
</feature>
<dbReference type="EMBL" id="CP000117">
    <property type="protein sequence ID" value="ABA20329.1"/>
    <property type="molecule type" value="Genomic_DNA"/>
</dbReference>
<dbReference type="SMR" id="Q3MFA7"/>
<dbReference type="STRING" id="240292.Ava_0705"/>
<dbReference type="KEGG" id="ava:Ava_0705"/>
<dbReference type="eggNOG" id="COG0097">
    <property type="taxonomic scope" value="Bacteria"/>
</dbReference>
<dbReference type="HOGENOM" id="CLU_065464_1_2_3"/>
<dbReference type="Proteomes" id="UP000002533">
    <property type="component" value="Chromosome"/>
</dbReference>
<dbReference type="GO" id="GO:0022625">
    <property type="term" value="C:cytosolic large ribosomal subunit"/>
    <property type="evidence" value="ECO:0007669"/>
    <property type="project" value="TreeGrafter"/>
</dbReference>
<dbReference type="GO" id="GO:0019843">
    <property type="term" value="F:rRNA binding"/>
    <property type="evidence" value="ECO:0007669"/>
    <property type="project" value="UniProtKB-UniRule"/>
</dbReference>
<dbReference type="GO" id="GO:0003735">
    <property type="term" value="F:structural constituent of ribosome"/>
    <property type="evidence" value="ECO:0007669"/>
    <property type="project" value="InterPro"/>
</dbReference>
<dbReference type="GO" id="GO:0002181">
    <property type="term" value="P:cytoplasmic translation"/>
    <property type="evidence" value="ECO:0007669"/>
    <property type="project" value="TreeGrafter"/>
</dbReference>
<dbReference type="FunFam" id="3.90.930.12:FF:000001">
    <property type="entry name" value="50S ribosomal protein L6"/>
    <property type="match status" value="1"/>
</dbReference>
<dbReference type="FunFam" id="3.90.930.12:FF:000002">
    <property type="entry name" value="50S ribosomal protein L6"/>
    <property type="match status" value="1"/>
</dbReference>
<dbReference type="Gene3D" id="3.90.930.12">
    <property type="entry name" value="Ribosomal protein L6, alpha-beta domain"/>
    <property type="match status" value="2"/>
</dbReference>
<dbReference type="HAMAP" id="MF_01365_B">
    <property type="entry name" value="Ribosomal_uL6_B"/>
    <property type="match status" value="1"/>
</dbReference>
<dbReference type="InterPro" id="IPR000702">
    <property type="entry name" value="Ribosomal_uL6-like"/>
</dbReference>
<dbReference type="InterPro" id="IPR036789">
    <property type="entry name" value="Ribosomal_uL6-like_a/b-dom_sf"/>
</dbReference>
<dbReference type="InterPro" id="IPR020040">
    <property type="entry name" value="Ribosomal_uL6_a/b-dom"/>
</dbReference>
<dbReference type="InterPro" id="IPR019906">
    <property type="entry name" value="Ribosomal_uL6_bac-type"/>
</dbReference>
<dbReference type="InterPro" id="IPR002358">
    <property type="entry name" value="Ribosomal_uL6_CS"/>
</dbReference>
<dbReference type="NCBIfam" id="TIGR03654">
    <property type="entry name" value="L6_bact"/>
    <property type="match status" value="1"/>
</dbReference>
<dbReference type="PANTHER" id="PTHR11655">
    <property type="entry name" value="60S/50S RIBOSOMAL PROTEIN L6/L9"/>
    <property type="match status" value="1"/>
</dbReference>
<dbReference type="PANTHER" id="PTHR11655:SF14">
    <property type="entry name" value="LARGE RIBOSOMAL SUBUNIT PROTEIN UL6M"/>
    <property type="match status" value="1"/>
</dbReference>
<dbReference type="Pfam" id="PF00347">
    <property type="entry name" value="Ribosomal_L6"/>
    <property type="match status" value="2"/>
</dbReference>
<dbReference type="PIRSF" id="PIRSF002162">
    <property type="entry name" value="Ribosomal_L6"/>
    <property type="match status" value="1"/>
</dbReference>
<dbReference type="PRINTS" id="PR00059">
    <property type="entry name" value="RIBOSOMALL6"/>
</dbReference>
<dbReference type="SUPFAM" id="SSF56053">
    <property type="entry name" value="Ribosomal protein L6"/>
    <property type="match status" value="2"/>
</dbReference>
<dbReference type="PROSITE" id="PS00525">
    <property type="entry name" value="RIBOSOMAL_L6_1"/>
    <property type="match status" value="1"/>
</dbReference>
<proteinExistence type="inferred from homology"/>
<comment type="function">
    <text evidence="1">This protein binds to the 23S rRNA, and is important in its secondary structure. It is located near the subunit interface in the base of the L7/L12 stalk, and near the tRNA binding site of the peptidyltransferase center.</text>
</comment>
<comment type="subunit">
    <text evidence="1">Part of the 50S ribosomal subunit.</text>
</comment>
<comment type="similarity">
    <text evidence="1">Belongs to the universal ribosomal protein uL6 family.</text>
</comment>
<reference key="1">
    <citation type="journal article" date="2014" name="Stand. Genomic Sci.">
        <title>Complete genome sequence of Anabaena variabilis ATCC 29413.</title>
        <authorList>
            <person name="Thiel T."/>
            <person name="Pratte B.S."/>
            <person name="Zhong J."/>
            <person name="Goodwin L."/>
            <person name="Copeland A."/>
            <person name="Lucas S."/>
            <person name="Han C."/>
            <person name="Pitluck S."/>
            <person name="Land M.L."/>
            <person name="Kyrpides N.C."/>
            <person name="Woyke T."/>
        </authorList>
    </citation>
    <scope>NUCLEOTIDE SEQUENCE [LARGE SCALE GENOMIC DNA]</scope>
    <source>
        <strain>ATCC 29413 / PCC 7937</strain>
    </source>
</reference>
<evidence type="ECO:0000255" key="1">
    <source>
        <dbReference type="HAMAP-Rule" id="MF_01365"/>
    </source>
</evidence>
<evidence type="ECO:0000305" key="2"/>
<name>RL6_TRIV2</name>
<organism>
    <name type="scientific">Trichormus variabilis (strain ATCC 29413 / PCC 7937)</name>
    <name type="common">Anabaena variabilis</name>
    <dbReference type="NCBI Taxonomy" id="240292"/>
    <lineage>
        <taxon>Bacteria</taxon>
        <taxon>Bacillati</taxon>
        <taxon>Cyanobacteriota</taxon>
        <taxon>Cyanophyceae</taxon>
        <taxon>Nostocales</taxon>
        <taxon>Nostocaceae</taxon>
        <taxon>Trichormus</taxon>
    </lineage>
</organism>
<protein>
    <recommendedName>
        <fullName evidence="1">Large ribosomal subunit protein uL6</fullName>
    </recommendedName>
    <alternativeName>
        <fullName evidence="2">50S ribosomal protein L6</fullName>
    </alternativeName>
</protein>
<sequence length="182" mass="19914">MSRIGKRPITVPAKVQVTIDGTKVVVKGPKGELSRELPVNVSVSQEGETLQVTRRDETRTSRQLHGLSRTLVANMVEGVSQGFQRRLEIQGVGYRAQVQGRNLILNMGYSHQVQIEPPDGIQFAVENNTNVIVSGYDKEIVGNTAAKIRAVRPPEPYKGKGIRYAGEVVRRKAGKTGKGGKK</sequence>
<keyword id="KW-0687">Ribonucleoprotein</keyword>
<keyword id="KW-0689">Ribosomal protein</keyword>
<keyword id="KW-0694">RNA-binding</keyword>
<keyword id="KW-0699">rRNA-binding</keyword>